<accession>Q8H1D4</accession>
<accession>B5BUY7</accession>
<accession>Q8VXY2</accession>
<accession>Q9LZI5</accession>
<reference key="1">
    <citation type="submission" date="2008-08" db="EMBL/GenBank/DDBJ databases">
        <title>Efficient protocol for exhaustive detection of RNA viruses with the isolation of viral replicative form double-stranded RNA using recombinant plant dsRNA binding protein.</title>
        <authorList>
            <person name="Kobayashi K."/>
            <person name="Tomita R."/>
            <person name="Sakamoto M."/>
        </authorList>
    </citation>
    <scope>NUCLEOTIDE SEQUENCE [MRNA] (ISOFORM 2)</scope>
    <source>
        <strain>cv. Columbia</strain>
    </source>
</reference>
<reference key="2">
    <citation type="journal article" date="2000" name="Nature">
        <title>Sequence and analysis of chromosome 3 of the plant Arabidopsis thaliana.</title>
        <authorList>
            <person name="Salanoubat M."/>
            <person name="Lemcke K."/>
            <person name="Rieger M."/>
            <person name="Ansorge W."/>
            <person name="Unseld M."/>
            <person name="Fartmann B."/>
            <person name="Valle G."/>
            <person name="Bloecker H."/>
            <person name="Perez-Alonso M."/>
            <person name="Obermaier B."/>
            <person name="Delseny M."/>
            <person name="Boutry M."/>
            <person name="Grivell L.A."/>
            <person name="Mache R."/>
            <person name="Puigdomenech P."/>
            <person name="De Simone V."/>
            <person name="Choisne N."/>
            <person name="Artiguenave F."/>
            <person name="Robert C."/>
            <person name="Brottier P."/>
            <person name="Wincker P."/>
            <person name="Cattolico L."/>
            <person name="Weissenbach J."/>
            <person name="Saurin W."/>
            <person name="Quetier F."/>
            <person name="Schaefer M."/>
            <person name="Mueller-Auer S."/>
            <person name="Gabel C."/>
            <person name="Fuchs M."/>
            <person name="Benes V."/>
            <person name="Wurmbach E."/>
            <person name="Drzonek H."/>
            <person name="Erfle H."/>
            <person name="Jordan N."/>
            <person name="Bangert S."/>
            <person name="Wiedelmann R."/>
            <person name="Kranz H."/>
            <person name="Voss H."/>
            <person name="Holland R."/>
            <person name="Brandt P."/>
            <person name="Nyakatura G."/>
            <person name="Vezzi A."/>
            <person name="D'Angelo M."/>
            <person name="Pallavicini A."/>
            <person name="Toppo S."/>
            <person name="Simionati B."/>
            <person name="Conrad A."/>
            <person name="Hornischer K."/>
            <person name="Kauer G."/>
            <person name="Loehnert T.-H."/>
            <person name="Nordsiek G."/>
            <person name="Reichelt J."/>
            <person name="Scharfe M."/>
            <person name="Schoen O."/>
            <person name="Bargues M."/>
            <person name="Terol J."/>
            <person name="Climent J."/>
            <person name="Navarro P."/>
            <person name="Collado C."/>
            <person name="Perez-Perez A."/>
            <person name="Ottenwaelder B."/>
            <person name="Duchemin D."/>
            <person name="Cooke R."/>
            <person name="Laudie M."/>
            <person name="Berger-Llauro C."/>
            <person name="Purnelle B."/>
            <person name="Masuy D."/>
            <person name="de Haan M."/>
            <person name="Maarse A.C."/>
            <person name="Alcaraz J.-P."/>
            <person name="Cottet A."/>
            <person name="Casacuberta E."/>
            <person name="Monfort A."/>
            <person name="Argiriou A."/>
            <person name="Flores M."/>
            <person name="Liguori R."/>
            <person name="Vitale D."/>
            <person name="Mannhaupt G."/>
            <person name="Haase D."/>
            <person name="Schoof H."/>
            <person name="Rudd S."/>
            <person name="Zaccaria P."/>
            <person name="Mewes H.-W."/>
            <person name="Mayer K.F.X."/>
            <person name="Kaul S."/>
            <person name="Town C.D."/>
            <person name="Koo H.L."/>
            <person name="Tallon L.J."/>
            <person name="Jenkins J."/>
            <person name="Rooney T."/>
            <person name="Rizzo M."/>
            <person name="Walts A."/>
            <person name="Utterback T."/>
            <person name="Fujii C.Y."/>
            <person name="Shea T.P."/>
            <person name="Creasy T.H."/>
            <person name="Haas B."/>
            <person name="Maiti R."/>
            <person name="Wu D."/>
            <person name="Peterson J."/>
            <person name="Van Aken S."/>
            <person name="Pai G."/>
            <person name="Militscher J."/>
            <person name="Sellers P."/>
            <person name="Gill J.E."/>
            <person name="Feldblyum T.V."/>
            <person name="Preuss D."/>
            <person name="Lin X."/>
            <person name="Nierman W.C."/>
            <person name="Salzberg S.L."/>
            <person name="White O."/>
            <person name="Venter J.C."/>
            <person name="Fraser C.M."/>
            <person name="Kaneko T."/>
            <person name="Nakamura Y."/>
            <person name="Sato S."/>
            <person name="Kato T."/>
            <person name="Asamizu E."/>
            <person name="Sasamoto S."/>
            <person name="Kimura T."/>
            <person name="Idesawa K."/>
            <person name="Kawashima K."/>
            <person name="Kishida Y."/>
            <person name="Kiyokawa C."/>
            <person name="Kohara M."/>
            <person name="Matsumoto M."/>
            <person name="Matsuno A."/>
            <person name="Muraki A."/>
            <person name="Nakayama S."/>
            <person name="Nakazaki N."/>
            <person name="Shinpo S."/>
            <person name="Takeuchi C."/>
            <person name="Wada T."/>
            <person name="Watanabe A."/>
            <person name="Yamada M."/>
            <person name="Yasuda M."/>
            <person name="Tabata S."/>
        </authorList>
    </citation>
    <scope>NUCLEOTIDE SEQUENCE [LARGE SCALE GENOMIC DNA]</scope>
    <source>
        <strain>cv. Columbia</strain>
    </source>
</reference>
<reference key="3">
    <citation type="journal article" date="2017" name="Plant J.">
        <title>Araport11: a complete reannotation of the Arabidopsis thaliana reference genome.</title>
        <authorList>
            <person name="Cheng C.Y."/>
            <person name="Krishnakumar V."/>
            <person name="Chan A.P."/>
            <person name="Thibaud-Nissen F."/>
            <person name="Schobel S."/>
            <person name="Town C.D."/>
        </authorList>
    </citation>
    <scope>GENOME REANNOTATION</scope>
    <source>
        <strain>cv. Columbia</strain>
    </source>
</reference>
<reference key="4">
    <citation type="journal article" date="2003" name="Science">
        <title>Empirical analysis of transcriptional activity in the Arabidopsis genome.</title>
        <authorList>
            <person name="Yamada K."/>
            <person name="Lim J."/>
            <person name="Dale J.M."/>
            <person name="Chen H."/>
            <person name="Shinn P."/>
            <person name="Palm C.J."/>
            <person name="Southwick A.M."/>
            <person name="Wu H.C."/>
            <person name="Kim C.J."/>
            <person name="Nguyen M."/>
            <person name="Pham P.K."/>
            <person name="Cheuk R.F."/>
            <person name="Karlin-Newmann G."/>
            <person name="Liu S.X."/>
            <person name="Lam B."/>
            <person name="Sakano H."/>
            <person name="Wu T."/>
            <person name="Yu G."/>
            <person name="Miranda M."/>
            <person name="Quach H.L."/>
            <person name="Tripp M."/>
            <person name="Chang C.H."/>
            <person name="Lee J.M."/>
            <person name="Toriumi M.J."/>
            <person name="Chan M.M."/>
            <person name="Tang C.C."/>
            <person name="Onodera C.S."/>
            <person name="Deng J.M."/>
            <person name="Akiyama K."/>
            <person name="Ansari Y."/>
            <person name="Arakawa T."/>
            <person name="Banh J."/>
            <person name="Banno F."/>
            <person name="Bowser L."/>
            <person name="Brooks S.Y."/>
            <person name="Carninci P."/>
            <person name="Chao Q."/>
            <person name="Choy N."/>
            <person name="Enju A."/>
            <person name="Goldsmith A.D."/>
            <person name="Gurjal M."/>
            <person name="Hansen N.F."/>
            <person name="Hayashizaki Y."/>
            <person name="Johnson-Hopson C."/>
            <person name="Hsuan V.W."/>
            <person name="Iida K."/>
            <person name="Karnes M."/>
            <person name="Khan S."/>
            <person name="Koesema E."/>
            <person name="Ishida J."/>
            <person name="Jiang P.X."/>
            <person name="Jones T."/>
            <person name="Kawai J."/>
            <person name="Kamiya A."/>
            <person name="Meyers C."/>
            <person name="Nakajima M."/>
            <person name="Narusaka M."/>
            <person name="Seki M."/>
            <person name="Sakurai T."/>
            <person name="Satou M."/>
            <person name="Tamse R."/>
            <person name="Vaysberg M."/>
            <person name="Wallender E.K."/>
            <person name="Wong C."/>
            <person name="Yamamura Y."/>
            <person name="Yuan S."/>
            <person name="Shinozaki K."/>
            <person name="Davis R.W."/>
            <person name="Theologis A."/>
            <person name="Ecker J.R."/>
        </authorList>
    </citation>
    <scope>NUCLEOTIDE SEQUENCE [LARGE SCALE MRNA] (ISOFORM 1)</scope>
    <source>
        <strain>cv. Columbia</strain>
    </source>
</reference>
<reference key="5">
    <citation type="journal article" date="2005" name="Plant Mol. Biol.">
        <title>Specific interactions between Dicer-like proteins and HYL1/DRB-family dsRNA-binding proteins in Arabidopsis thaliana.</title>
        <authorList>
            <person name="Hiraguri A."/>
            <person name="Itoh R."/>
            <person name="Kondo N."/>
            <person name="Nomura Y."/>
            <person name="Aizawa D."/>
            <person name="Murai Y."/>
            <person name="Koiwa H."/>
            <person name="Seki M."/>
            <person name="Shinozaki K."/>
            <person name="Fukuhara T."/>
        </authorList>
    </citation>
    <scope>SUBCELLULAR LOCATION</scope>
    <scope>INTERACTION WITH DCL4; DRB1 AND DRB5</scope>
</reference>
<reference key="6">
    <citation type="journal article" date="2006" name="Curr. Biol.">
        <title>DRB4-dependent TAS3 trans-acting siRNAs control leaf morphology through AGO7.</title>
        <authorList>
            <person name="Adenot X."/>
            <person name="Elmayan T."/>
            <person name="Lauressergues D."/>
            <person name="Boutet S."/>
            <person name="Bouche N."/>
            <person name="Gasciolli V."/>
            <person name="Vaucheret H."/>
        </authorList>
    </citation>
    <scope>FUNCTION</scope>
</reference>
<reference key="7">
    <citation type="journal article" date="2007" name="Plant Mol. Biol.">
        <title>The dsRNA-binding protein DRB4 interacts with the Dicer-like protein DCL4 in vivo and functions in the trans-acting siRNA pathway.</title>
        <authorList>
            <person name="Nakazawa Y."/>
            <person name="Hiraguri A."/>
            <person name="Moriyama H."/>
            <person name="Fukuhara T."/>
        </authorList>
    </citation>
    <scope>FUNCTION</scope>
    <scope>INTERACTION WITH DCL4</scope>
    <scope>DISRUPTION PHENOTYPE</scope>
</reference>
<reference key="8">
    <citation type="journal article" date="2008" name="FEBS Lett.">
        <title>The roles of plant dsRNA-binding proteins in RNAi-like pathways.</title>
        <authorList>
            <person name="Curtin S.J."/>
            <person name="Watson J.M."/>
            <person name="Smith N.A."/>
            <person name="Eamens A.L."/>
            <person name="Blanchard C.L."/>
            <person name="Waterhouse P.M."/>
        </authorList>
    </citation>
    <scope>FUNCTION</scope>
    <scope>TISSUE SPECIFICITY</scope>
    <scope>DISRUPTION PHENOTYPE</scope>
</reference>
<reference key="9">
    <citation type="journal article" date="2008" name="EMBO J.">
        <title>Nuclear import of CaMV P6 is required for infection and suppression of the RNA silencing factor DRB4.</title>
        <authorList>
            <person name="Haas G."/>
            <person name="Azevedo J."/>
            <person name="Moissiard G."/>
            <person name="Geldreich A."/>
            <person name="Himber C."/>
            <person name="Bureau M."/>
            <person name="Fukuhara T."/>
            <person name="Keller M."/>
            <person name="Voinnet O."/>
        </authorList>
    </citation>
    <scope>INTERACTION WITH CAULIFLOWER MOSAIC VIRUS TRANSACTIVATOR/VIROPLASMIN PROTEIN</scope>
</reference>
<reference key="10">
    <citation type="journal article" date="2008" name="Proc. Natl. Acad. Sci. U.S.A.">
        <title>Arabidopsis DRB4, AGO1, AGO7, and RDR6 participate in a DCL4-initiated antiviral RNA silencing pathway negatively regulated by DCL1.</title>
        <authorList>
            <person name="Qu F."/>
            <person name="Ye X."/>
            <person name="Morris T.J."/>
        </authorList>
    </citation>
    <scope>FUNCTION</scope>
</reference>
<reference key="11">
    <citation type="journal article" date="2009" name="Plant Physiol.">
        <title>Large-scale Arabidopsis phosphoproteome profiling reveals novel chloroplast kinase substrates and phosphorylation networks.</title>
        <authorList>
            <person name="Reiland S."/>
            <person name="Messerli G."/>
            <person name="Baerenfaller K."/>
            <person name="Gerrits B."/>
            <person name="Endler A."/>
            <person name="Grossmann J."/>
            <person name="Gruissem W."/>
            <person name="Baginsky S."/>
        </authorList>
    </citation>
    <scope>IDENTIFICATION BY MASS SPECTROMETRY [LARGE SCALE ANALYSIS]</scope>
</reference>
<keyword id="KW-0002">3D-structure</keyword>
<keyword id="KW-0025">Alternative splicing</keyword>
<keyword id="KW-0945">Host-virus interaction</keyword>
<keyword id="KW-0539">Nucleus</keyword>
<keyword id="KW-0611">Plant defense</keyword>
<keyword id="KW-1185">Reference proteome</keyword>
<keyword id="KW-0677">Repeat</keyword>
<keyword id="KW-0694">RNA-binding</keyword>
<keyword id="KW-0943">RNA-mediated gene silencing</keyword>
<evidence type="ECO:0000255" key="1">
    <source>
        <dbReference type="PROSITE-ProRule" id="PRU00266"/>
    </source>
</evidence>
<evidence type="ECO:0000256" key="2">
    <source>
        <dbReference type="SAM" id="MobiDB-lite"/>
    </source>
</evidence>
<evidence type="ECO:0000269" key="3">
    <source>
    </source>
</evidence>
<evidence type="ECO:0000269" key="4">
    <source>
    </source>
</evidence>
<evidence type="ECO:0000269" key="5">
    <source>
    </source>
</evidence>
<evidence type="ECO:0000269" key="6">
    <source>
    </source>
</evidence>
<evidence type="ECO:0000269" key="7">
    <source>
    </source>
</evidence>
<evidence type="ECO:0000269" key="8">
    <source>
    </source>
</evidence>
<evidence type="ECO:0000303" key="9">
    <source ref="1"/>
</evidence>
<evidence type="ECO:0000305" key="10"/>
<evidence type="ECO:0007829" key="11">
    <source>
        <dbReference type="PDB" id="2N3F"/>
    </source>
</evidence>
<dbReference type="EMBL" id="AB455097">
    <property type="protein sequence ID" value="BAG69145.1"/>
    <property type="molecule type" value="mRNA"/>
</dbReference>
<dbReference type="EMBL" id="AL162651">
    <property type="protein sequence ID" value="CAB83130.1"/>
    <property type="status" value="ALT_SEQ"/>
    <property type="molecule type" value="Genomic_DNA"/>
</dbReference>
<dbReference type="EMBL" id="CP002686">
    <property type="protein sequence ID" value="AEE80393.1"/>
    <property type="molecule type" value="Genomic_DNA"/>
</dbReference>
<dbReference type="EMBL" id="CP002686">
    <property type="protein sequence ID" value="AEE80394.1"/>
    <property type="molecule type" value="Genomic_DNA"/>
</dbReference>
<dbReference type="EMBL" id="CP002686">
    <property type="protein sequence ID" value="AEE80395.1"/>
    <property type="molecule type" value="Genomic_DNA"/>
</dbReference>
<dbReference type="EMBL" id="AY074363">
    <property type="protein sequence ID" value="AAL67059.1"/>
    <property type="molecule type" value="mRNA"/>
</dbReference>
<dbReference type="EMBL" id="AY150509">
    <property type="protein sequence ID" value="AAN13025.1"/>
    <property type="molecule type" value="mRNA"/>
</dbReference>
<dbReference type="PIR" id="T48069">
    <property type="entry name" value="T48069"/>
</dbReference>
<dbReference type="RefSeq" id="NP_001154686.1">
    <molecule id="Q8H1D4-2"/>
    <property type="nucleotide sequence ID" value="NM_001161214.2"/>
</dbReference>
<dbReference type="RefSeq" id="NP_191839.2">
    <molecule id="Q8H1D4-1"/>
    <property type="nucleotide sequence ID" value="NM_116145.4"/>
</dbReference>
<dbReference type="RefSeq" id="NP_974480.1">
    <molecule id="Q8H1D4-1"/>
    <property type="nucleotide sequence ID" value="NM_202751.1"/>
</dbReference>
<dbReference type="PDB" id="2N3F">
    <property type="method" value="NMR"/>
    <property type="chains" value="A=1-153"/>
</dbReference>
<dbReference type="PDB" id="2N3G">
    <property type="method" value="NMR"/>
    <property type="chains" value="A=1-153"/>
</dbReference>
<dbReference type="PDB" id="2N3H">
    <property type="method" value="NMR"/>
    <property type="chains" value="A=1-153"/>
</dbReference>
<dbReference type="PDB" id="8IGD">
    <property type="method" value="X-ray"/>
    <property type="resolution" value="2.90 A"/>
    <property type="chains" value="C/D=294-355"/>
</dbReference>
<dbReference type="PDBsum" id="2N3F"/>
<dbReference type="PDBsum" id="2N3G"/>
<dbReference type="PDBsum" id="2N3H"/>
<dbReference type="PDBsum" id="8IGD"/>
<dbReference type="BMRB" id="Q8H1D4"/>
<dbReference type="SMR" id="Q8H1D4"/>
<dbReference type="BioGRID" id="10769">
    <property type="interactions" value="6"/>
</dbReference>
<dbReference type="FunCoup" id="Q8H1D4">
    <property type="interactions" value="373"/>
</dbReference>
<dbReference type="IntAct" id="Q8H1D4">
    <property type="interactions" value="2"/>
</dbReference>
<dbReference type="MINT" id="Q8H1D4"/>
<dbReference type="STRING" id="3702.Q8H1D4"/>
<dbReference type="iPTMnet" id="Q8H1D4"/>
<dbReference type="PaxDb" id="3702-AT3G62800.1"/>
<dbReference type="ProteomicsDB" id="241260">
    <molecule id="Q8H1D4-1"/>
</dbReference>
<dbReference type="EnsemblPlants" id="AT3G62800.1">
    <molecule id="Q8H1D4-1"/>
    <property type="protein sequence ID" value="AT3G62800.1"/>
    <property type="gene ID" value="AT3G62800"/>
</dbReference>
<dbReference type="EnsemblPlants" id="AT3G62800.2">
    <molecule id="Q8H1D4-1"/>
    <property type="protein sequence ID" value="AT3G62800.2"/>
    <property type="gene ID" value="AT3G62800"/>
</dbReference>
<dbReference type="EnsemblPlants" id="AT3G62800.3">
    <molecule id="Q8H1D4-2"/>
    <property type="protein sequence ID" value="AT3G62800.3"/>
    <property type="gene ID" value="AT3G62800"/>
</dbReference>
<dbReference type="Gramene" id="AT3G62800.1">
    <molecule id="Q8H1D4-1"/>
    <property type="protein sequence ID" value="AT3G62800.1"/>
    <property type="gene ID" value="AT3G62800"/>
</dbReference>
<dbReference type="Gramene" id="AT3G62800.2">
    <molecule id="Q8H1D4-1"/>
    <property type="protein sequence ID" value="AT3G62800.2"/>
    <property type="gene ID" value="AT3G62800"/>
</dbReference>
<dbReference type="Gramene" id="AT3G62800.3">
    <molecule id="Q8H1D4-2"/>
    <property type="protein sequence ID" value="AT3G62800.3"/>
    <property type="gene ID" value="AT3G62800"/>
</dbReference>
<dbReference type="KEGG" id="ath:AT3G62800"/>
<dbReference type="Araport" id="AT3G62800"/>
<dbReference type="TAIR" id="AT3G62800">
    <property type="gene designation" value="DRB4"/>
</dbReference>
<dbReference type="eggNOG" id="ENOG502QTBA">
    <property type="taxonomic scope" value="Eukaryota"/>
</dbReference>
<dbReference type="InParanoid" id="Q8H1D4"/>
<dbReference type="OMA" id="HPTNDAT"/>
<dbReference type="PhylomeDB" id="Q8H1D4"/>
<dbReference type="PRO" id="PR:Q8H1D4"/>
<dbReference type="Proteomes" id="UP000006548">
    <property type="component" value="Chromosome 3"/>
</dbReference>
<dbReference type="ExpressionAtlas" id="Q8H1D4">
    <property type="expression patterns" value="baseline and differential"/>
</dbReference>
<dbReference type="GO" id="GO:0005634">
    <property type="term" value="C:nucleus"/>
    <property type="evidence" value="ECO:0000314"/>
    <property type="project" value="TAIR"/>
</dbReference>
<dbReference type="GO" id="GO:0003725">
    <property type="term" value="F:double-stranded RNA binding"/>
    <property type="evidence" value="ECO:0000314"/>
    <property type="project" value="TAIR"/>
</dbReference>
<dbReference type="GO" id="GO:0051607">
    <property type="term" value="P:defense response to virus"/>
    <property type="evidence" value="ECO:0000315"/>
    <property type="project" value="CACAO"/>
</dbReference>
<dbReference type="GO" id="GO:0035196">
    <property type="term" value="P:miRNA processing"/>
    <property type="evidence" value="ECO:0000315"/>
    <property type="project" value="TAIR"/>
</dbReference>
<dbReference type="GO" id="GO:0009616">
    <property type="term" value="P:RNAi-mediated antiviral immune response"/>
    <property type="evidence" value="ECO:0000315"/>
    <property type="project" value="UniProtKB"/>
</dbReference>
<dbReference type="GO" id="GO:0010267">
    <property type="term" value="P:ta-siRNA processing"/>
    <property type="evidence" value="ECO:0000315"/>
    <property type="project" value="TAIR"/>
</dbReference>
<dbReference type="CDD" id="cd19907">
    <property type="entry name" value="DSRM_AtDRB-like_rpt1"/>
    <property type="match status" value="1"/>
</dbReference>
<dbReference type="CDD" id="cd19908">
    <property type="entry name" value="DSRM_AtDRB-like_rpt2"/>
    <property type="match status" value="1"/>
</dbReference>
<dbReference type="FunFam" id="3.30.160.20:FF:000036">
    <property type="entry name" value="Double-stranded RNA-binding protein 2"/>
    <property type="match status" value="1"/>
</dbReference>
<dbReference type="Gene3D" id="3.30.160.20">
    <property type="match status" value="2"/>
</dbReference>
<dbReference type="InterPro" id="IPR044450">
    <property type="entry name" value="AtDRB-like_DSRM_1"/>
</dbReference>
<dbReference type="InterPro" id="IPR044451">
    <property type="entry name" value="AtDRB-like_DSRM_2"/>
</dbReference>
<dbReference type="InterPro" id="IPR014720">
    <property type="entry name" value="dsRBD_dom"/>
</dbReference>
<dbReference type="PANTHER" id="PTHR46031">
    <property type="match status" value="1"/>
</dbReference>
<dbReference type="PANTHER" id="PTHR46031:SF16">
    <property type="entry name" value="DOUBLE-STRANDED RNA-BINDING PROTEIN 4"/>
    <property type="match status" value="1"/>
</dbReference>
<dbReference type="Pfam" id="PF00035">
    <property type="entry name" value="dsrm"/>
    <property type="match status" value="2"/>
</dbReference>
<dbReference type="SMART" id="SM00358">
    <property type="entry name" value="DSRM"/>
    <property type="match status" value="2"/>
</dbReference>
<dbReference type="SUPFAM" id="SSF54768">
    <property type="entry name" value="dsRNA-binding domain-like"/>
    <property type="match status" value="2"/>
</dbReference>
<dbReference type="PROSITE" id="PS50137">
    <property type="entry name" value="DS_RBD"/>
    <property type="match status" value="2"/>
</dbReference>
<organism>
    <name type="scientific">Arabidopsis thaliana</name>
    <name type="common">Mouse-ear cress</name>
    <dbReference type="NCBI Taxonomy" id="3702"/>
    <lineage>
        <taxon>Eukaryota</taxon>
        <taxon>Viridiplantae</taxon>
        <taxon>Streptophyta</taxon>
        <taxon>Embryophyta</taxon>
        <taxon>Tracheophyta</taxon>
        <taxon>Spermatophyta</taxon>
        <taxon>Magnoliopsida</taxon>
        <taxon>eudicotyledons</taxon>
        <taxon>Gunneridae</taxon>
        <taxon>Pentapetalae</taxon>
        <taxon>rosids</taxon>
        <taxon>malvids</taxon>
        <taxon>Brassicales</taxon>
        <taxon>Brassicaceae</taxon>
        <taxon>Camelineae</taxon>
        <taxon>Arabidopsis</taxon>
    </lineage>
</organism>
<proteinExistence type="evidence at protein level"/>
<name>DRB4_ARATH</name>
<gene>
    <name type="primary">DBR4</name>
    <name type="ordered locus">At3g62800</name>
    <name type="ORF">F26K9.230</name>
</gene>
<comment type="function">
    <text evidence="4 5 7 8">Double-stranded RNA-binding protein involved in RNA-mediated post-transcriptional gene silencing (PTGS). Functions in the trans-acting small interfering RNAs (ta-siRNAs) biogenesis by binding and assisting DICER-LIKE 4 (DCL4). Required for DCL4 activity. Required for the 21 nucleotide ta-siRNAs production of the TAS3 transcript in leaves but not in flowers. Plays an important role in silencing RNA of both DNA and RNA viruses. Involved with argonaute 7 (AGO7) and RDR6 in turnip crinkle virus (TCV) silencing. May not be directly involved in viral siRNA production. May stabilize the 21 nucleotide viral siRNAs and deliver them to the RISC complex. Targeted by the viral silencing suppressor (VSR) transactivator/viroplasmin (TAV) protein of the cauliflower mosaic virus (CaMV) that inactivates DRB4 function in RNA silencing. Probably not involved in the guide strand selection from RNA duplexes. Involved in leaf morphology through its function in ta-siRNA-mediated silencing.</text>
</comment>
<comment type="subunit">
    <text evidence="3 5 6">Heterodimer with DRB1 or DRB5. Interacts with DCL4 and cauliflower mosaic virus (CaMV) transactivator/viroplasmin protein. Interaction with CaMV transactivator/viroplasmin protein inhibits RNA silencing ability of DRB4.</text>
</comment>
<comment type="subcellular location">
    <subcellularLocation>
        <location evidence="3">Nucleus</location>
    </subcellularLocation>
</comment>
<comment type="alternative products">
    <event type="alternative splicing"/>
    <isoform>
        <id>Q8H1D4-1</id>
        <name>1</name>
        <sequence type="displayed"/>
    </isoform>
    <isoform>
        <id>Q8H1D4-2</id>
        <name>2</name>
        <sequence type="described" ref="VSP_040614"/>
    </isoform>
</comment>
<comment type="tissue specificity">
    <text evidence="7">Expressed in roots, leaf vasculature, shoot apical meristem (SAM) and developing anthers.</text>
</comment>
<comment type="disruption phenotype">
    <text evidence="5 7">Elongated and downwardly curled rosette leaves. In old plants, rosette and cauline leaves and flowers change to red color. Increased levels of ARF3 and ARF4 transcripts, targeted by TAS1 and TAS3, respectively.</text>
</comment>
<comment type="sequence caution" evidence="10">
    <conflict type="erroneous gene model prediction">
        <sequence resource="EMBL-CDS" id="CAB83130"/>
    </conflict>
</comment>
<feature type="chain" id="PRO_0000404655" description="Double-stranded RNA-binding protein 4">
    <location>
        <begin position="1"/>
        <end position="355"/>
    </location>
</feature>
<feature type="domain" description="DRBM 1" evidence="1">
    <location>
        <begin position="4"/>
        <end position="73"/>
    </location>
</feature>
<feature type="domain" description="DRBM 2" evidence="1">
    <location>
        <begin position="82"/>
        <end position="150"/>
    </location>
</feature>
<feature type="region of interest" description="Disordered" evidence="2">
    <location>
        <begin position="149"/>
        <end position="193"/>
    </location>
</feature>
<feature type="compositionally biased region" description="Polar residues" evidence="2">
    <location>
        <begin position="149"/>
        <end position="188"/>
    </location>
</feature>
<feature type="splice variant" id="VSP_040614" description="In isoform 2." evidence="9">
    <location>
        <begin position="243"/>
        <end position="268"/>
    </location>
</feature>
<feature type="sequence conflict" description="In Ref. 4; AAL67059." evidence="10" ref="4">
    <original>M</original>
    <variation>V</variation>
    <location>
        <position position="190"/>
    </location>
</feature>
<feature type="helix" evidence="11">
    <location>
        <begin position="4"/>
        <end position="16"/>
    </location>
</feature>
<feature type="strand" evidence="11">
    <location>
        <begin position="22"/>
        <end position="24"/>
    </location>
</feature>
<feature type="strand" evidence="11">
    <location>
        <begin position="39"/>
        <end position="42"/>
    </location>
</feature>
<feature type="strand" evidence="11">
    <location>
        <begin position="45"/>
        <end position="47"/>
    </location>
</feature>
<feature type="strand" evidence="11">
    <location>
        <begin position="53"/>
        <end position="55"/>
    </location>
</feature>
<feature type="helix" evidence="11">
    <location>
        <begin position="56"/>
        <end position="71"/>
    </location>
</feature>
<feature type="helix" evidence="11">
    <location>
        <begin position="72"/>
        <end position="74"/>
    </location>
</feature>
<feature type="strand" evidence="11">
    <location>
        <begin position="79"/>
        <end position="81"/>
    </location>
</feature>
<feature type="helix" evidence="11">
    <location>
        <begin position="84"/>
        <end position="93"/>
    </location>
</feature>
<feature type="strand" evidence="11">
    <location>
        <begin position="101"/>
        <end position="107"/>
    </location>
</feature>
<feature type="strand" evidence="11">
    <location>
        <begin position="109"/>
        <end position="111"/>
    </location>
</feature>
<feature type="strand" evidence="11">
    <location>
        <begin position="113"/>
        <end position="120"/>
    </location>
</feature>
<feature type="strand" evidence="11">
    <location>
        <begin position="123"/>
        <end position="126"/>
    </location>
</feature>
<feature type="helix" evidence="11">
    <location>
        <begin position="133"/>
        <end position="149"/>
    </location>
</feature>
<sequence length="355" mass="38416">MDHVYKGQLQAYALQHNLELPVYANEREGPPHAPRFRCNVTFCGQTFQSSEFFPTLKSAEHAAAKIAVASLTPQSPEGIDVAYKNLLQEIAQKESSLLPFYATATSGPSHAPTFTSTVEFAGKVFSGEEAKTKKLAEMSAAKVAFMSIKNGNSNQTGSPTLPSERQEDVNSNVKSSPQEIHSQPSSKVVMTPDTPSKGIKVNEDEFPDLHDAPASNAKEINVALNEPENPTNDGTLSALTTDGMKMNIASSSLPIPHNPTNVITLNAPAANGIKRNIAACSSWMPQNPTNDGSETSSCVVDESEKKKLIMGTGHLSIPTGQHVVCRPWNPEITLPQDAEMLFRDDKFIAYRLVKP</sequence>
<protein>
    <recommendedName>
        <fullName>Double-stranded RNA-binding protein 4</fullName>
    </recommendedName>
    <alternativeName>
        <fullName>dsRNA-binding protein 4</fullName>
        <shortName>AtDRB4</shortName>
    </alternativeName>
</protein>